<name>FBD31_ARATH</name>
<reference key="1">
    <citation type="journal article" date="1998" name="DNA Res.">
        <title>Structural analysis of Arabidopsis thaliana chromosome 5. VII. Sequence features of the regions of 1,013,767 bp covered by sixteen physically assigned P1 and TAC clones.</title>
        <authorList>
            <person name="Nakamura Y."/>
            <person name="Sato S."/>
            <person name="Asamizu E."/>
            <person name="Kaneko T."/>
            <person name="Kotani H."/>
            <person name="Miyajima N."/>
            <person name="Tabata S."/>
        </authorList>
    </citation>
    <scope>NUCLEOTIDE SEQUENCE [LARGE SCALE GENOMIC DNA]</scope>
    <source>
        <strain>cv. Columbia</strain>
    </source>
</reference>
<reference key="2">
    <citation type="journal article" date="2017" name="Plant J.">
        <title>Araport11: a complete reannotation of the Arabidopsis thaliana reference genome.</title>
        <authorList>
            <person name="Cheng C.Y."/>
            <person name="Krishnakumar V."/>
            <person name="Chan A.P."/>
            <person name="Thibaud-Nissen F."/>
            <person name="Schobel S."/>
            <person name="Town C.D."/>
        </authorList>
    </citation>
    <scope>GENOME REANNOTATION</scope>
    <source>
        <strain>cv. Columbia</strain>
    </source>
</reference>
<sequence length="426" mass="49269">MISQLPDPLICHILSHLPIKDLVTTRVLSTRWRSLWLWLPCLELNSLYFPDFNAFVSFGDKFFDSNRVSCINKFKLYIYGYDVGVDDPSYLTSWIDAAVKCKIQHLHVQCLPAKYIYEMPLSLYICETLVYLKLCRVMLDDAEFVSLPCLKTIHLEYVWFPNEANLERFVSCCPVLEELKIYGCGNENAITLRLLSRSLKKLSINILKSMCDFHSEVVIDAPLLSYLKINDNVSERYIVNNLESNAKLDISLPFGLLDFDEASVSSRTDSIHSFLRGILKVSDMTIWVDTFKLICKYSELESLPRFGYMSRLHVTLCIYDLKWLPTFLESCPNLKSLILVCVGDNDEMLSEEMIQFGSSLVPECLLSSLEFVDIRIPFRGHLEVMKLVRYFLENSAILKKLSLDHDIFKKLFTIPRRSTKCQVVFI</sequence>
<feature type="chain" id="PRO_0000365269" description="Putative FBD-associated F-box protein At5g53635">
    <location>
        <begin position="1"/>
        <end position="426"/>
    </location>
</feature>
<feature type="domain" description="F-box" evidence="1">
    <location>
        <begin position="1"/>
        <end position="45"/>
    </location>
</feature>
<feature type="domain" description="FBD">
    <location>
        <begin position="353"/>
        <end position="405"/>
    </location>
</feature>
<accession>Q9FJC1</accession>
<organism>
    <name type="scientific">Arabidopsis thaliana</name>
    <name type="common">Mouse-ear cress</name>
    <dbReference type="NCBI Taxonomy" id="3702"/>
    <lineage>
        <taxon>Eukaryota</taxon>
        <taxon>Viridiplantae</taxon>
        <taxon>Streptophyta</taxon>
        <taxon>Embryophyta</taxon>
        <taxon>Tracheophyta</taxon>
        <taxon>Spermatophyta</taxon>
        <taxon>Magnoliopsida</taxon>
        <taxon>eudicotyledons</taxon>
        <taxon>Gunneridae</taxon>
        <taxon>Pentapetalae</taxon>
        <taxon>rosids</taxon>
        <taxon>malvids</taxon>
        <taxon>Brassicales</taxon>
        <taxon>Brassicaceae</taxon>
        <taxon>Camelineae</taxon>
        <taxon>Arabidopsis</taxon>
    </lineage>
</organism>
<protein>
    <recommendedName>
        <fullName>Putative FBD-associated F-box protein At5g53635</fullName>
    </recommendedName>
</protein>
<gene>
    <name type="ordered locus">At5g53635</name>
    <name type="ORF">MNC6.17</name>
</gene>
<evidence type="ECO:0000255" key="1">
    <source>
        <dbReference type="PROSITE-ProRule" id="PRU00080"/>
    </source>
</evidence>
<dbReference type="EMBL" id="AB015476">
    <property type="protein sequence ID" value="BAB09739.1"/>
    <property type="molecule type" value="Genomic_DNA"/>
</dbReference>
<dbReference type="EMBL" id="CP002688">
    <property type="protein sequence ID" value="AED96389.1"/>
    <property type="molecule type" value="Genomic_DNA"/>
</dbReference>
<dbReference type="RefSeq" id="NP_001190533.1">
    <property type="nucleotide sequence ID" value="NM_001203604.1"/>
</dbReference>
<dbReference type="FunCoup" id="Q9FJC1">
    <property type="interactions" value="5"/>
</dbReference>
<dbReference type="PaxDb" id="3702-AT5G53635.1"/>
<dbReference type="ProteomicsDB" id="230887"/>
<dbReference type="EnsemblPlants" id="AT5G53635.1">
    <property type="protein sequence ID" value="AT5G53635.1"/>
    <property type="gene ID" value="AT5G53635"/>
</dbReference>
<dbReference type="GeneID" id="10723099"/>
<dbReference type="Gramene" id="AT5G53635.1">
    <property type="protein sequence ID" value="AT5G53635.1"/>
    <property type="gene ID" value="AT5G53635"/>
</dbReference>
<dbReference type="KEGG" id="ath:AT5G53635"/>
<dbReference type="Araport" id="AT5G53635"/>
<dbReference type="TAIR" id="AT5G53635"/>
<dbReference type="HOGENOM" id="CLU_010721_1_3_1"/>
<dbReference type="InParanoid" id="Q9FJC1"/>
<dbReference type="OMA" id="CGQYSEL"/>
<dbReference type="OrthoDB" id="1052855at2759"/>
<dbReference type="PRO" id="PR:Q9FJC1"/>
<dbReference type="Proteomes" id="UP000006548">
    <property type="component" value="Chromosome 5"/>
</dbReference>
<dbReference type="ExpressionAtlas" id="Q9FJC1">
    <property type="expression patterns" value="baseline and differential"/>
</dbReference>
<dbReference type="CDD" id="cd22160">
    <property type="entry name" value="F-box_AtFBL13-like"/>
    <property type="match status" value="1"/>
</dbReference>
<dbReference type="Gene3D" id="1.20.1280.50">
    <property type="match status" value="1"/>
</dbReference>
<dbReference type="Gene3D" id="3.80.10.10">
    <property type="entry name" value="Ribonuclease Inhibitor"/>
    <property type="match status" value="1"/>
</dbReference>
<dbReference type="InterPro" id="IPR036047">
    <property type="entry name" value="F-box-like_dom_sf"/>
</dbReference>
<dbReference type="InterPro" id="IPR053781">
    <property type="entry name" value="F-box_AtFBL13-like"/>
</dbReference>
<dbReference type="InterPro" id="IPR001810">
    <property type="entry name" value="F-box_dom"/>
</dbReference>
<dbReference type="InterPro" id="IPR006566">
    <property type="entry name" value="FBD"/>
</dbReference>
<dbReference type="InterPro" id="IPR050232">
    <property type="entry name" value="FBL13/AtMIF1-like"/>
</dbReference>
<dbReference type="InterPro" id="IPR032675">
    <property type="entry name" value="LRR_dom_sf"/>
</dbReference>
<dbReference type="InterPro" id="IPR055411">
    <property type="entry name" value="LRR_FXL15/At3g58940/PEG3-like"/>
</dbReference>
<dbReference type="PANTHER" id="PTHR31900">
    <property type="entry name" value="F-BOX/RNI SUPERFAMILY PROTEIN-RELATED"/>
    <property type="match status" value="1"/>
</dbReference>
<dbReference type="PANTHER" id="PTHR31900:SF25">
    <property type="entry name" value="FBD DOMAIN-CONTAINING PROTEIN"/>
    <property type="match status" value="1"/>
</dbReference>
<dbReference type="Pfam" id="PF00646">
    <property type="entry name" value="F-box"/>
    <property type="match status" value="1"/>
</dbReference>
<dbReference type="Pfam" id="PF08387">
    <property type="entry name" value="FBD"/>
    <property type="match status" value="1"/>
</dbReference>
<dbReference type="Pfam" id="PF24758">
    <property type="entry name" value="LRR_At5g56370"/>
    <property type="match status" value="1"/>
</dbReference>
<dbReference type="SMART" id="SM00579">
    <property type="entry name" value="FBD"/>
    <property type="match status" value="1"/>
</dbReference>
<dbReference type="SMART" id="SM00256">
    <property type="entry name" value="FBOX"/>
    <property type="match status" value="1"/>
</dbReference>
<dbReference type="SUPFAM" id="SSF81383">
    <property type="entry name" value="F-box domain"/>
    <property type="match status" value="1"/>
</dbReference>
<dbReference type="SUPFAM" id="SSF52047">
    <property type="entry name" value="RNI-like"/>
    <property type="match status" value="1"/>
</dbReference>
<dbReference type="PROSITE" id="PS50181">
    <property type="entry name" value="FBOX"/>
    <property type="match status" value="1"/>
</dbReference>
<proteinExistence type="predicted"/>
<keyword id="KW-1185">Reference proteome</keyword>